<organism>
    <name type="scientific">Arabidopsis thaliana</name>
    <name type="common">Mouse-ear cress</name>
    <dbReference type="NCBI Taxonomy" id="3702"/>
    <lineage>
        <taxon>Eukaryota</taxon>
        <taxon>Viridiplantae</taxon>
        <taxon>Streptophyta</taxon>
        <taxon>Embryophyta</taxon>
        <taxon>Tracheophyta</taxon>
        <taxon>Spermatophyta</taxon>
        <taxon>Magnoliopsida</taxon>
        <taxon>eudicotyledons</taxon>
        <taxon>Gunneridae</taxon>
        <taxon>Pentapetalae</taxon>
        <taxon>rosids</taxon>
        <taxon>malvids</taxon>
        <taxon>Brassicales</taxon>
        <taxon>Brassicaceae</taxon>
        <taxon>Camelineae</taxon>
        <taxon>Arabidopsis</taxon>
    </lineage>
</organism>
<accession>Q9CAG5</accession>
<sequence length="782" mass="86343">MDVTELEENLFAASDAKLHGDMCKELSGVLCKVLSIFPSLEGARPRSKSGIQALCSLHIALEKAKNILQHCSECSKLYLAITGDAVLLKFEKAKIALIDGLKRVEDIVPSSIGSQILEIVGELENTRFMLDPSEKEVGDQIIALLQQGKKFDNCNDNTELEIFHRAATRLSITSSRVALAERRALKKLIDRARAEEDKRKESIVAYLLHLMRKCSKLFRSEILDENDSPGSYPCSPNEDHGSVHGFGRQLSRFGSLNDKPMNSINSGQMPVPPEELRCPISLQLMCDPVIIASGQTYERVCIEKWFSDGHNTCPKTQQQLPHISLTPNNCVKGLIASWCEQNGTQIPSGPPESQDLDYWRLALSDSESTKSQSVNSIGSYKLKGVKIVPLEENGTTVVERQNTEESFVSDDDDEEDSDINVLERYQDLLAVLNEEEGLEKKCKVVEKIRLLLKDDEEARIFMGANGFVEALLRFLGSAVDDNNAAAQDSGAMALFNLAVNNNRNKELMLTSGVIRLLEKMISSAESHGSATALYLNLSCLDEAKSVIGSSQAVPFLVQLLQKEIETQCKLDALHALYNLSTYSPNIPALLSSNIIKSLQGLLASTGENLWIEKSLAVLLNLASSQEGKDEAVSSQGMISSLATVLDMGDTTEQEQAVSCLLILCNGRESCIQMVLQEGVIPSLVSISVNGTPRGREKSQKLLMLFREERQQRDQPSSNRDEPPQKEPARKSLSAPLSVHGSTPASASVQDYEPRVLSKSMSRRKSMARPFSFFWKKSYSVRE</sequence>
<dbReference type="EC" id="2.3.2.27"/>
<dbReference type="EMBL" id="AC011020">
    <property type="protein sequence ID" value="AAG52304.1"/>
    <property type="molecule type" value="Genomic_DNA"/>
</dbReference>
<dbReference type="EMBL" id="CP002684">
    <property type="protein sequence ID" value="AEE34659.1"/>
    <property type="molecule type" value="Genomic_DNA"/>
</dbReference>
<dbReference type="EMBL" id="CP002684">
    <property type="protein sequence ID" value="AEE34660.1"/>
    <property type="molecule type" value="Genomic_DNA"/>
</dbReference>
<dbReference type="EMBL" id="CP002684">
    <property type="protein sequence ID" value="ANM59775.1"/>
    <property type="molecule type" value="Genomic_DNA"/>
</dbReference>
<dbReference type="EMBL" id="AK117197">
    <property type="protein sequence ID" value="BAC41873.1"/>
    <property type="molecule type" value="mRNA"/>
</dbReference>
<dbReference type="EMBL" id="BT006484">
    <property type="protein sequence ID" value="AAP21292.1"/>
    <property type="molecule type" value="mRNA"/>
</dbReference>
<dbReference type="PIR" id="G96698">
    <property type="entry name" value="G96698"/>
</dbReference>
<dbReference type="RefSeq" id="NP_001154455.1">
    <property type="nucleotide sequence ID" value="NM_001160983.2"/>
</dbReference>
<dbReference type="RefSeq" id="NP_001322110.1">
    <property type="nucleotide sequence ID" value="NM_001334315.1"/>
</dbReference>
<dbReference type="RefSeq" id="NP_176920.1">
    <property type="nucleotide sequence ID" value="NM_105420.3"/>
</dbReference>
<dbReference type="SMR" id="Q9CAG5"/>
<dbReference type="BioGRID" id="28295">
    <property type="interactions" value="8"/>
</dbReference>
<dbReference type="FunCoup" id="Q9CAG5">
    <property type="interactions" value="153"/>
</dbReference>
<dbReference type="IntAct" id="Q9CAG5">
    <property type="interactions" value="3"/>
</dbReference>
<dbReference type="STRING" id="3702.Q9CAG5"/>
<dbReference type="iPTMnet" id="Q9CAG5"/>
<dbReference type="PaxDb" id="3702-AT1G67530.1"/>
<dbReference type="ProteomicsDB" id="226262"/>
<dbReference type="EnsemblPlants" id="AT1G67530.1">
    <property type="protein sequence ID" value="AT1G67530.1"/>
    <property type="gene ID" value="AT1G67530"/>
</dbReference>
<dbReference type="EnsemblPlants" id="AT1G67530.2">
    <property type="protein sequence ID" value="AT1G67530.2"/>
    <property type="gene ID" value="AT1G67530"/>
</dbReference>
<dbReference type="EnsemblPlants" id="AT1G67530.4">
    <property type="protein sequence ID" value="AT1G67530.4"/>
    <property type="gene ID" value="AT1G67530"/>
</dbReference>
<dbReference type="GeneID" id="843074"/>
<dbReference type="Gramene" id="AT1G67530.1">
    <property type="protein sequence ID" value="AT1G67530.1"/>
    <property type="gene ID" value="AT1G67530"/>
</dbReference>
<dbReference type="Gramene" id="AT1G67530.2">
    <property type="protein sequence ID" value="AT1G67530.2"/>
    <property type="gene ID" value="AT1G67530"/>
</dbReference>
<dbReference type="Gramene" id="AT1G67530.4">
    <property type="protein sequence ID" value="AT1G67530.4"/>
    <property type="gene ID" value="AT1G67530"/>
</dbReference>
<dbReference type="KEGG" id="ath:AT1G67530"/>
<dbReference type="Araport" id="AT1G67530"/>
<dbReference type="TAIR" id="AT1G67530"/>
<dbReference type="eggNOG" id="KOG0167">
    <property type="taxonomic scope" value="Eukaryota"/>
</dbReference>
<dbReference type="HOGENOM" id="CLU_006348_4_1_1"/>
<dbReference type="InParanoid" id="Q9CAG5"/>
<dbReference type="OMA" id="SCYDFDM"/>
<dbReference type="PhylomeDB" id="Q9CAG5"/>
<dbReference type="UniPathway" id="UPA00143"/>
<dbReference type="PRO" id="PR:Q9CAG5"/>
<dbReference type="Proteomes" id="UP000006548">
    <property type="component" value="Chromosome 1"/>
</dbReference>
<dbReference type="ExpressionAtlas" id="Q9CAG5">
    <property type="expression patterns" value="baseline and differential"/>
</dbReference>
<dbReference type="GO" id="GO:0004842">
    <property type="term" value="F:ubiquitin-protein transferase activity"/>
    <property type="evidence" value="ECO:0007669"/>
    <property type="project" value="InterPro"/>
</dbReference>
<dbReference type="GO" id="GO:0016567">
    <property type="term" value="P:protein ubiquitination"/>
    <property type="evidence" value="ECO:0007669"/>
    <property type="project" value="UniProtKB-UniPathway"/>
</dbReference>
<dbReference type="CDD" id="cd16664">
    <property type="entry name" value="RING-Ubox_PUB"/>
    <property type="match status" value="1"/>
</dbReference>
<dbReference type="FunFam" id="1.25.10.10:FF:000310">
    <property type="entry name" value="RING-type E3 ubiquitin transferase"/>
    <property type="match status" value="1"/>
</dbReference>
<dbReference type="FunFam" id="3.30.40.10:FF:000114">
    <property type="entry name" value="RING-type E3 ubiquitin transferase"/>
    <property type="match status" value="1"/>
</dbReference>
<dbReference type="Gene3D" id="1.25.10.10">
    <property type="entry name" value="Leucine-rich Repeat Variant"/>
    <property type="match status" value="1"/>
</dbReference>
<dbReference type="Gene3D" id="3.30.40.10">
    <property type="entry name" value="Zinc/RING finger domain, C3HC4 (zinc finger)"/>
    <property type="match status" value="1"/>
</dbReference>
<dbReference type="InterPro" id="IPR011989">
    <property type="entry name" value="ARM-like"/>
</dbReference>
<dbReference type="InterPro" id="IPR016024">
    <property type="entry name" value="ARM-type_fold"/>
</dbReference>
<dbReference type="InterPro" id="IPR000225">
    <property type="entry name" value="Armadillo"/>
</dbReference>
<dbReference type="InterPro" id="IPR045210">
    <property type="entry name" value="RING-Ubox_PUB"/>
</dbReference>
<dbReference type="InterPro" id="IPR003613">
    <property type="entry name" value="Ubox_domain"/>
</dbReference>
<dbReference type="InterPro" id="IPR013083">
    <property type="entry name" value="Znf_RING/FYVE/PHD"/>
</dbReference>
<dbReference type="PANTHER" id="PTHR23315">
    <property type="entry name" value="U BOX DOMAIN-CONTAINING"/>
    <property type="match status" value="1"/>
</dbReference>
<dbReference type="PANTHER" id="PTHR23315:SF284">
    <property type="entry name" value="U-BOX DOMAIN-CONTAINING PROTEIN 7"/>
    <property type="match status" value="1"/>
</dbReference>
<dbReference type="Pfam" id="PF04564">
    <property type="entry name" value="U-box"/>
    <property type="match status" value="1"/>
</dbReference>
<dbReference type="SMART" id="SM00185">
    <property type="entry name" value="ARM"/>
    <property type="match status" value="5"/>
</dbReference>
<dbReference type="SMART" id="SM00504">
    <property type="entry name" value="Ubox"/>
    <property type="match status" value="1"/>
</dbReference>
<dbReference type="SUPFAM" id="SSF48371">
    <property type="entry name" value="ARM repeat"/>
    <property type="match status" value="1"/>
</dbReference>
<dbReference type="SUPFAM" id="SSF57850">
    <property type="entry name" value="RING/U-box"/>
    <property type="match status" value="1"/>
</dbReference>
<dbReference type="PROSITE" id="PS50176">
    <property type="entry name" value="ARM_REPEAT"/>
    <property type="match status" value="1"/>
</dbReference>
<dbReference type="PROSITE" id="PS51698">
    <property type="entry name" value="U_BOX"/>
    <property type="match status" value="1"/>
</dbReference>
<evidence type="ECO:0000250" key="1"/>
<evidence type="ECO:0000256" key="2">
    <source>
        <dbReference type="SAM" id="MobiDB-lite"/>
    </source>
</evidence>
<evidence type="ECO:0000305" key="3"/>
<gene>
    <name type="primary">PUB7</name>
    <name type="ordered locus">At1g67530</name>
    <name type="ORF">F12B7.8</name>
</gene>
<reference key="1">
    <citation type="journal article" date="2000" name="Nature">
        <title>Sequence and analysis of chromosome 1 of the plant Arabidopsis thaliana.</title>
        <authorList>
            <person name="Theologis A."/>
            <person name="Ecker J.R."/>
            <person name="Palm C.J."/>
            <person name="Federspiel N.A."/>
            <person name="Kaul S."/>
            <person name="White O."/>
            <person name="Alonso J."/>
            <person name="Altafi H."/>
            <person name="Araujo R."/>
            <person name="Bowman C.L."/>
            <person name="Brooks S.Y."/>
            <person name="Buehler E."/>
            <person name="Chan A."/>
            <person name="Chao Q."/>
            <person name="Chen H."/>
            <person name="Cheuk R.F."/>
            <person name="Chin C.W."/>
            <person name="Chung M.K."/>
            <person name="Conn L."/>
            <person name="Conway A.B."/>
            <person name="Conway A.R."/>
            <person name="Creasy T.H."/>
            <person name="Dewar K."/>
            <person name="Dunn P."/>
            <person name="Etgu P."/>
            <person name="Feldblyum T.V."/>
            <person name="Feng J.-D."/>
            <person name="Fong B."/>
            <person name="Fujii C.Y."/>
            <person name="Gill J.E."/>
            <person name="Goldsmith A.D."/>
            <person name="Haas B."/>
            <person name="Hansen N.F."/>
            <person name="Hughes B."/>
            <person name="Huizar L."/>
            <person name="Hunter J.L."/>
            <person name="Jenkins J."/>
            <person name="Johnson-Hopson C."/>
            <person name="Khan S."/>
            <person name="Khaykin E."/>
            <person name="Kim C.J."/>
            <person name="Koo H.L."/>
            <person name="Kremenetskaia I."/>
            <person name="Kurtz D.B."/>
            <person name="Kwan A."/>
            <person name="Lam B."/>
            <person name="Langin-Hooper S."/>
            <person name="Lee A."/>
            <person name="Lee J.M."/>
            <person name="Lenz C.A."/>
            <person name="Li J.H."/>
            <person name="Li Y.-P."/>
            <person name="Lin X."/>
            <person name="Liu S.X."/>
            <person name="Liu Z.A."/>
            <person name="Luros J.S."/>
            <person name="Maiti R."/>
            <person name="Marziali A."/>
            <person name="Militscher J."/>
            <person name="Miranda M."/>
            <person name="Nguyen M."/>
            <person name="Nierman W.C."/>
            <person name="Osborne B.I."/>
            <person name="Pai G."/>
            <person name="Peterson J."/>
            <person name="Pham P.K."/>
            <person name="Rizzo M."/>
            <person name="Rooney T."/>
            <person name="Rowley D."/>
            <person name="Sakano H."/>
            <person name="Salzberg S.L."/>
            <person name="Schwartz J.R."/>
            <person name="Shinn P."/>
            <person name="Southwick A.M."/>
            <person name="Sun H."/>
            <person name="Tallon L.J."/>
            <person name="Tambunga G."/>
            <person name="Toriumi M.J."/>
            <person name="Town C.D."/>
            <person name="Utterback T."/>
            <person name="Van Aken S."/>
            <person name="Vaysberg M."/>
            <person name="Vysotskaia V.S."/>
            <person name="Walker M."/>
            <person name="Wu D."/>
            <person name="Yu G."/>
            <person name="Fraser C.M."/>
            <person name="Venter J.C."/>
            <person name="Davis R.W."/>
        </authorList>
    </citation>
    <scope>NUCLEOTIDE SEQUENCE [LARGE SCALE GENOMIC DNA]</scope>
    <source>
        <strain>cv. Columbia</strain>
    </source>
</reference>
<reference key="2">
    <citation type="journal article" date="2017" name="Plant J.">
        <title>Araport11: a complete reannotation of the Arabidopsis thaliana reference genome.</title>
        <authorList>
            <person name="Cheng C.Y."/>
            <person name="Krishnakumar V."/>
            <person name="Chan A.P."/>
            <person name="Thibaud-Nissen F."/>
            <person name="Schobel S."/>
            <person name="Town C.D."/>
        </authorList>
    </citation>
    <scope>GENOME REANNOTATION</scope>
    <source>
        <strain>cv. Columbia</strain>
    </source>
</reference>
<reference key="3">
    <citation type="journal article" date="2002" name="Science">
        <title>Functional annotation of a full-length Arabidopsis cDNA collection.</title>
        <authorList>
            <person name="Seki M."/>
            <person name="Narusaka M."/>
            <person name="Kamiya A."/>
            <person name="Ishida J."/>
            <person name="Satou M."/>
            <person name="Sakurai T."/>
            <person name="Nakajima M."/>
            <person name="Enju A."/>
            <person name="Akiyama K."/>
            <person name="Oono Y."/>
            <person name="Muramatsu M."/>
            <person name="Hayashizaki Y."/>
            <person name="Kawai J."/>
            <person name="Carninci P."/>
            <person name="Itoh M."/>
            <person name="Ishii Y."/>
            <person name="Arakawa T."/>
            <person name="Shibata K."/>
            <person name="Shinagawa A."/>
            <person name="Shinozaki K."/>
        </authorList>
    </citation>
    <scope>NUCLEOTIDE SEQUENCE [LARGE SCALE MRNA]</scope>
    <source>
        <strain>cv. Columbia</strain>
    </source>
</reference>
<reference key="4">
    <citation type="journal article" date="2003" name="Science">
        <title>Empirical analysis of transcriptional activity in the Arabidopsis genome.</title>
        <authorList>
            <person name="Yamada K."/>
            <person name="Lim J."/>
            <person name="Dale J.M."/>
            <person name="Chen H."/>
            <person name="Shinn P."/>
            <person name="Palm C.J."/>
            <person name="Southwick A.M."/>
            <person name="Wu H.C."/>
            <person name="Kim C.J."/>
            <person name="Nguyen M."/>
            <person name="Pham P.K."/>
            <person name="Cheuk R.F."/>
            <person name="Karlin-Newmann G."/>
            <person name="Liu S.X."/>
            <person name="Lam B."/>
            <person name="Sakano H."/>
            <person name="Wu T."/>
            <person name="Yu G."/>
            <person name="Miranda M."/>
            <person name="Quach H.L."/>
            <person name="Tripp M."/>
            <person name="Chang C.H."/>
            <person name="Lee J.M."/>
            <person name="Toriumi M.J."/>
            <person name="Chan M.M."/>
            <person name="Tang C.C."/>
            <person name="Onodera C.S."/>
            <person name="Deng J.M."/>
            <person name="Akiyama K."/>
            <person name="Ansari Y."/>
            <person name="Arakawa T."/>
            <person name="Banh J."/>
            <person name="Banno F."/>
            <person name="Bowser L."/>
            <person name="Brooks S.Y."/>
            <person name="Carninci P."/>
            <person name="Chao Q."/>
            <person name="Choy N."/>
            <person name="Enju A."/>
            <person name="Goldsmith A.D."/>
            <person name="Gurjal M."/>
            <person name="Hansen N.F."/>
            <person name="Hayashizaki Y."/>
            <person name="Johnson-Hopson C."/>
            <person name="Hsuan V.W."/>
            <person name="Iida K."/>
            <person name="Karnes M."/>
            <person name="Khan S."/>
            <person name="Koesema E."/>
            <person name="Ishida J."/>
            <person name="Jiang P.X."/>
            <person name="Jones T."/>
            <person name="Kawai J."/>
            <person name="Kamiya A."/>
            <person name="Meyers C."/>
            <person name="Nakajima M."/>
            <person name="Narusaka M."/>
            <person name="Seki M."/>
            <person name="Sakurai T."/>
            <person name="Satou M."/>
            <person name="Tamse R."/>
            <person name="Vaysberg M."/>
            <person name="Wallender E.K."/>
            <person name="Wong C."/>
            <person name="Yamamura Y."/>
            <person name="Yuan S."/>
            <person name="Shinozaki K."/>
            <person name="Davis R.W."/>
            <person name="Theologis A."/>
            <person name="Ecker J.R."/>
        </authorList>
    </citation>
    <scope>NUCLEOTIDE SEQUENCE [LARGE SCALE MRNA]</scope>
    <source>
        <strain>cv. Columbia</strain>
    </source>
</reference>
<reference key="5">
    <citation type="journal article" date="2001" name="Trends Plant Sci.">
        <title>The U-box protein family in plants.</title>
        <authorList>
            <person name="Azevedo C."/>
            <person name="Santos-Rosa M.J."/>
            <person name="Shirasu K."/>
        </authorList>
    </citation>
    <scope>GENE FAMILY ORGANIZATION</scope>
    <scope>NOMENCLATURE</scope>
</reference>
<reference key="6">
    <citation type="journal article" date="2004" name="Plant Physiol.">
        <title>A large complement of the predicted Arabidopsis ARM repeat proteins are members of the U-box E3 ubiquitin ligase family.</title>
        <authorList>
            <person name="Mudgil Y."/>
            <person name="Shiu S.-H."/>
            <person name="Stone S.L."/>
            <person name="Salt J.N."/>
            <person name="Goring D.R."/>
        </authorList>
    </citation>
    <scope>GENE FAMILY ORGANIZATION</scope>
</reference>
<protein>
    <recommendedName>
        <fullName>U-box domain-containing protein 7</fullName>
        <ecNumber>2.3.2.27</ecNumber>
    </recommendedName>
    <alternativeName>
        <fullName>Plant U-box protein 7</fullName>
    </alternativeName>
    <alternativeName>
        <fullName evidence="3">RING-type E3 ubiquitin transferase PUB7</fullName>
    </alternativeName>
</protein>
<keyword id="KW-1185">Reference proteome</keyword>
<keyword id="KW-0677">Repeat</keyword>
<keyword id="KW-0808">Transferase</keyword>
<keyword id="KW-0833">Ubl conjugation pathway</keyword>
<proteinExistence type="evidence at transcript level"/>
<comment type="function">
    <text evidence="1">Functions as an E3 ubiquitin ligase.</text>
</comment>
<comment type="catalytic activity">
    <reaction>
        <text>S-ubiquitinyl-[E2 ubiquitin-conjugating enzyme]-L-cysteine + [acceptor protein]-L-lysine = [E2 ubiquitin-conjugating enzyme]-L-cysteine + N(6)-ubiquitinyl-[acceptor protein]-L-lysine.</text>
        <dbReference type="EC" id="2.3.2.27"/>
    </reaction>
</comment>
<comment type="pathway">
    <text>Protein modification; protein ubiquitination.</text>
</comment>
<feature type="chain" id="PRO_0000322152" description="U-box domain-containing protein 7">
    <location>
        <begin position="1"/>
        <end position="782"/>
    </location>
</feature>
<feature type="domain" description="U-box">
    <location>
        <begin position="271"/>
        <end position="345"/>
    </location>
</feature>
<feature type="repeat" description="ARM 1">
    <location>
        <begin position="456"/>
        <end position="499"/>
    </location>
</feature>
<feature type="repeat" description="ARM 2">
    <location>
        <begin position="502"/>
        <end position="541"/>
    </location>
</feature>
<feature type="repeat" description="ARM 3">
    <location>
        <begin position="542"/>
        <end position="581"/>
    </location>
</feature>
<feature type="repeat" description="ARM 4">
    <location>
        <begin position="583"/>
        <end position="623"/>
    </location>
</feature>
<feature type="repeat" description="ARM 5">
    <location>
        <begin position="626"/>
        <end position="665"/>
    </location>
</feature>
<feature type="region of interest" description="Disordered" evidence="2">
    <location>
        <begin position="707"/>
        <end position="765"/>
    </location>
</feature>
<feature type="compositionally biased region" description="Basic and acidic residues" evidence="2">
    <location>
        <begin position="707"/>
        <end position="729"/>
    </location>
</feature>
<feature type="compositionally biased region" description="Polar residues" evidence="2">
    <location>
        <begin position="739"/>
        <end position="748"/>
    </location>
</feature>
<name>PUB7_ARATH</name>